<dbReference type="EMBL" id="CP000742">
    <property type="protein sequence ID" value="ABR54638.1"/>
    <property type="molecule type" value="Genomic_DNA"/>
</dbReference>
<dbReference type="RefSeq" id="WP_011972540.1">
    <property type="nucleotide sequence ID" value="NC_009634.1"/>
</dbReference>
<dbReference type="SMR" id="A6UQ66"/>
<dbReference type="STRING" id="406327.Mevan_0732"/>
<dbReference type="GeneID" id="5325877"/>
<dbReference type="KEGG" id="mvn:Mevan_0732"/>
<dbReference type="eggNOG" id="arCOG00779">
    <property type="taxonomic scope" value="Archaea"/>
</dbReference>
<dbReference type="HOGENOM" id="CLU_109163_0_0_2"/>
<dbReference type="OrthoDB" id="9418at2157"/>
<dbReference type="Proteomes" id="UP000001107">
    <property type="component" value="Chromosome"/>
</dbReference>
<dbReference type="GO" id="GO:0022625">
    <property type="term" value="C:cytosolic large ribosomal subunit"/>
    <property type="evidence" value="ECO:0007669"/>
    <property type="project" value="TreeGrafter"/>
</dbReference>
<dbReference type="GO" id="GO:0019843">
    <property type="term" value="F:rRNA binding"/>
    <property type="evidence" value="ECO:0007669"/>
    <property type="project" value="UniProtKB-UniRule"/>
</dbReference>
<dbReference type="GO" id="GO:0003735">
    <property type="term" value="F:structural constituent of ribosome"/>
    <property type="evidence" value="ECO:0007669"/>
    <property type="project" value="InterPro"/>
</dbReference>
<dbReference type="GO" id="GO:0006412">
    <property type="term" value="P:translation"/>
    <property type="evidence" value="ECO:0007669"/>
    <property type="project" value="UniProtKB-UniRule"/>
</dbReference>
<dbReference type="Gene3D" id="3.100.10.10">
    <property type="match status" value="1"/>
</dbReference>
<dbReference type="Gene3D" id="4.10.990.10">
    <property type="match status" value="1"/>
</dbReference>
<dbReference type="HAMAP" id="MF_01341">
    <property type="entry name" value="Ribosomal_uL15"/>
    <property type="match status" value="1"/>
</dbReference>
<dbReference type="InterPro" id="IPR027386">
    <property type="entry name" value="Rbsml_uL15_N"/>
</dbReference>
<dbReference type="InterPro" id="IPR030878">
    <property type="entry name" value="Ribosomal_uL15"/>
</dbReference>
<dbReference type="InterPro" id="IPR021131">
    <property type="entry name" value="Ribosomal_uL15/eL18"/>
</dbReference>
<dbReference type="InterPro" id="IPR036227">
    <property type="entry name" value="Ribosomal_uL15/eL18_sf"/>
</dbReference>
<dbReference type="InterPro" id="IPR001196">
    <property type="entry name" value="Ribosomal_uL15_CS"/>
</dbReference>
<dbReference type="PANTHER" id="PTHR11721">
    <property type="entry name" value="60S RIBOSOMAL PROTEIN L27A"/>
    <property type="match status" value="1"/>
</dbReference>
<dbReference type="PANTHER" id="PTHR11721:SF3">
    <property type="entry name" value="LARGE RIBOSOMAL SUBUNIT PROTEIN UL15"/>
    <property type="match status" value="1"/>
</dbReference>
<dbReference type="Pfam" id="PF00828">
    <property type="entry name" value="Ribosomal_L27A"/>
    <property type="match status" value="1"/>
</dbReference>
<dbReference type="SUPFAM" id="SSF52080">
    <property type="entry name" value="Ribosomal proteins L15p and L18e"/>
    <property type="match status" value="1"/>
</dbReference>
<dbReference type="PROSITE" id="PS00475">
    <property type="entry name" value="RIBOSOMAL_L15"/>
    <property type="match status" value="1"/>
</dbReference>
<name>RL15_METVS</name>
<gene>
    <name evidence="1" type="primary">rpl15</name>
    <name type="ordered locus">Mevan_0732</name>
</gene>
<feature type="chain" id="PRO_1000054495" description="Large ribosomal subunit protein uL15">
    <location>
        <begin position="1"/>
        <end position="143"/>
    </location>
</feature>
<feature type="region of interest" description="Disordered" evidence="2">
    <location>
        <begin position="1"/>
        <end position="38"/>
    </location>
</feature>
<feature type="compositionally biased region" description="Basic residues" evidence="2">
    <location>
        <begin position="1"/>
        <end position="13"/>
    </location>
</feature>
<feature type="compositionally biased region" description="Basic residues" evidence="2">
    <location>
        <begin position="23"/>
        <end position="38"/>
    </location>
</feature>
<comment type="function">
    <text evidence="1">Binds to the 23S rRNA.</text>
</comment>
<comment type="subunit">
    <text evidence="1">Part of the 50S ribosomal subunit.</text>
</comment>
<comment type="similarity">
    <text evidence="1">Belongs to the universal ribosomal protein uL15 family.</text>
</comment>
<accession>A6UQ66</accession>
<reference key="1">
    <citation type="submission" date="2007-06" db="EMBL/GenBank/DDBJ databases">
        <title>Complete sequence of Methanococcus vannielii SB.</title>
        <authorList>
            <consortium name="US DOE Joint Genome Institute"/>
            <person name="Copeland A."/>
            <person name="Lucas S."/>
            <person name="Lapidus A."/>
            <person name="Barry K."/>
            <person name="Glavina del Rio T."/>
            <person name="Dalin E."/>
            <person name="Tice H."/>
            <person name="Pitluck S."/>
            <person name="Chain P."/>
            <person name="Malfatti S."/>
            <person name="Shin M."/>
            <person name="Vergez L."/>
            <person name="Schmutz J."/>
            <person name="Larimer F."/>
            <person name="Land M."/>
            <person name="Hauser L."/>
            <person name="Kyrpides N."/>
            <person name="Anderson I."/>
            <person name="Sieprawska-Lupa M."/>
            <person name="Whitman W.B."/>
            <person name="Richardson P."/>
        </authorList>
    </citation>
    <scope>NUCLEOTIDE SEQUENCE [LARGE SCALE GENOMIC DNA]</scope>
    <source>
        <strain>ATCC 35089 / DSM 1224 / JCM 13029 / OCM 148 / SB</strain>
    </source>
</reference>
<evidence type="ECO:0000255" key="1">
    <source>
        <dbReference type="HAMAP-Rule" id="MF_01341"/>
    </source>
</evidence>
<evidence type="ECO:0000256" key="2">
    <source>
        <dbReference type="SAM" id="MobiDB-lite"/>
    </source>
</evidence>
<evidence type="ECO:0000305" key="3"/>
<organism>
    <name type="scientific">Methanococcus vannielii (strain ATCC 35089 / DSM 1224 / JCM 13029 / OCM 148 / SB)</name>
    <dbReference type="NCBI Taxonomy" id="406327"/>
    <lineage>
        <taxon>Archaea</taxon>
        <taxon>Methanobacteriati</taxon>
        <taxon>Methanobacteriota</taxon>
        <taxon>Methanomada group</taxon>
        <taxon>Methanococci</taxon>
        <taxon>Methanococcales</taxon>
        <taxon>Methanococcaceae</taxon>
        <taxon>Methanococcus</taxon>
    </lineage>
</organism>
<proteinExistence type="inferred from homology"/>
<sequence>MIRKSKKITKQRGSRTCGYGEAKKHRGAGHRGGRGNAGHQKHKWLSVCKFNPEYFGKYGFNRNPCLIKKLETINVGELEEYVLKYKDAFKLKDGKVVVNATEIGFEKILGKGRISTAMVVKAVEFSEGAKEKIEAAGGEFVEL</sequence>
<keyword id="KW-0687">Ribonucleoprotein</keyword>
<keyword id="KW-0689">Ribosomal protein</keyword>
<keyword id="KW-0694">RNA-binding</keyword>
<keyword id="KW-0699">rRNA-binding</keyword>
<protein>
    <recommendedName>
        <fullName evidence="1">Large ribosomal subunit protein uL15</fullName>
    </recommendedName>
    <alternativeName>
        <fullName evidence="3">50S ribosomal protein L15</fullName>
    </alternativeName>
</protein>